<organismHost>
    <name type="scientific">Pseudoalteromonas espejiana</name>
    <dbReference type="NCBI Taxonomy" id="28107"/>
</organismHost>
<proteinExistence type="predicted"/>
<sequence length="51" mass="5696">MFSTLAKYLAVKLLTETFIKRVCLATAKHLANKSENTLDNELIDALEDALN</sequence>
<keyword id="KW-1185">Reference proteome</keyword>
<organism>
    <name type="scientific">Pseudoalteromonas phage PM2</name>
    <name type="common">Bacteriophage PM2</name>
    <dbReference type="NCBI Taxonomy" id="2905728"/>
    <lineage>
        <taxon>Viruses</taxon>
        <taxon>Varidnaviria</taxon>
        <taxon>Bamfordvirae</taxon>
        <taxon>Preplasmiviricota</taxon>
        <taxon>Tectiliviricetes</taxon>
        <taxon>Vinavirales</taxon>
        <taxon>Corticoviridae</taxon>
        <taxon>Corticovirus</taxon>
        <taxon>Corticovirus PM2</taxon>
    </lineage>
</organism>
<name>GPL_BPPM2</name>
<feature type="chain" id="PRO_0000339918" description="Uncharacterized protein Gp-l">
    <location>
        <begin position="1"/>
        <end position="51"/>
    </location>
</feature>
<reference key="1">
    <citation type="journal article" date="1999" name="Virology">
        <title>The complete genome sequence of PM2, the first lipid-containing bacterial virus to be isolated.</title>
        <authorList>
            <person name="Maennistoe R.H."/>
            <person name="Kivelae H.M."/>
            <person name="Paulin L."/>
            <person name="Bamford D.H."/>
            <person name="Bamford J.K."/>
        </authorList>
    </citation>
    <scope>NUCLEOTIDE SEQUENCE [GENOMIC DNA]</scope>
</reference>
<dbReference type="EMBL" id="AF155037">
    <property type="protein sequence ID" value="AAD43558.1"/>
    <property type="molecule type" value="Genomic_DNA"/>
</dbReference>
<dbReference type="RefSeq" id="NP_049912.1">
    <property type="nucleotide sequence ID" value="NC_000867.1"/>
</dbReference>
<dbReference type="SMR" id="Q9XJQ9"/>
<dbReference type="KEGG" id="vg:1262030"/>
<dbReference type="Proteomes" id="UP000002136">
    <property type="component" value="Genome"/>
</dbReference>
<accession>Q9XJQ9</accession>
<gene>
    <name type="ORF">l</name>
</gene>
<protein>
    <recommendedName>
        <fullName>Uncharacterized protein Gp-l</fullName>
    </recommendedName>
</protein>